<feature type="signal peptide" evidence="1">
    <location>
        <begin position="1"/>
        <end position="23"/>
    </location>
</feature>
<feature type="chain" id="PRO_5004302503" description="Moricin" evidence="1">
    <location>
        <begin position="24"/>
        <end position="67"/>
    </location>
</feature>
<feature type="helix" evidence="10">
    <location>
        <begin position="30"/>
        <end position="60"/>
    </location>
</feature>
<comment type="function">
    <text evidence="3 4 7">Antimicrobial peptide. Active against a broad spectrum of Gram-positive and Gram-negative bacteria including methicillin-resistant S.aureus ATCC 43 300, S.aureus BAA-39, pathogenic strains of L.monocytogenes, K.pneumoniae, E.coli O157:H7, S.typhimurium and multidrug-resistant S.typhimurium DT104 with minimum inhibitory concentration (MIC) of 1.4 uM for all except for S.aureus BAA-39 (PubMed:18265434). Also active against Serratia marcescens (PubMed:14728663). Probably acts by disturbing membrane functions with its amphipathic alpha-helical structure (PubMed:18265434). May protect a developing embryo from bacterial infection (Probable).</text>
</comment>
<comment type="subunit">
    <text evidence="4">Monomer.</text>
</comment>
<comment type="subcellular location">
    <subcellularLocation>
        <location evidence="7">Secreted</location>
    </subcellularLocation>
</comment>
<comment type="developmental stage">
    <text evidence="3 4">Expressed at low levels in nerve tissue, salivary gland, Malpighian tubule, trachea, midgut, fat body, integument and muscle from day 3, fifth instar naive larvae. Moderate levels expressed in fat body from the 4th instar larvae (day 0), 5th instar larvae (days 3 and 6), wandering larvae (day 6), and adults in the absence of infection. A moderate level of expression in the hemocytes of the naive larvae. Expression increases substantially in fat body and hemocytes after fifth instar larvae are challenged with bacterial cells (PubMed:18265434). Constitutive low expression in naive eggs, but up-regulated in them in response to bacteria. Expressed in 24 hour (predorsal closure stage) eggs in extra-embryonic tissues (yolk and serosa) after bacterial challenge, but not in embryos (PubMed:14728663).</text>
</comment>
<comment type="induction">
    <text evidence="2 3 4">By bacterial infection.</text>
</comment>
<comment type="similarity">
    <text evidence="7">Belongs to the moricin family.</text>
</comment>
<reference evidence="8" key="1">
    <citation type="journal article" date="2003" name="Insect Biochem. Mol. Biol.">
        <title>Identification by subtractive suppression hybridization of bacteria-induced genes expressed in Manduca sexta fat body.</title>
        <authorList>
            <person name="Zhu Y."/>
            <person name="Johnson T.J."/>
            <person name="Myers A.A."/>
            <person name="Kanost M.R."/>
        </authorList>
    </citation>
    <scope>NUCLEOTIDE SEQUENCE [MRNA]</scope>
    <scope>INDUCTION</scope>
    <source>
        <tissue evidence="5">Fat body</tissue>
    </source>
</reference>
<reference evidence="8" key="2">
    <citation type="journal article" date="2004" name="Insect Mol. Biol.">
        <title>Bacterial challenge stimulates innate immune responses in extra-embryonic tissues of tobacco hornworm eggs.</title>
        <authorList>
            <person name="Gorman M.J."/>
            <person name="Kankanala P."/>
            <person name="Kanost M.R."/>
        </authorList>
    </citation>
    <scope>FUNCTION</scope>
    <scope>DEVELOPMENTAL STAGE</scope>
    <scope>INDUCTION</scope>
</reference>
<reference evidence="9" key="3">
    <citation type="journal article" date="2008" name="J. Pept. Sci.">
        <title>Solution structure, antibacterial activity, and expression profile of Manduca sexta moricin.</title>
        <authorList>
            <person name="Dai H."/>
            <person name="Rayaprolu S."/>
            <person name="Gong Y."/>
            <person name="Huang R."/>
            <person name="Prakash O."/>
            <person name="Jiang H."/>
        </authorList>
    </citation>
    <scope>STRUCTURE BY NMR OF 26-67</scope>
    <scope>FUNCTION</scope>
    <scope>SUBUNIT</scope>
    <scope>DEVELOPMENTAL STAGE</scope>
    <scope>INDUCTION</scope>
    <scope>PEPTIDE SYNTHESIS</scope>
    <scope>CIRCULAR DICHROISM ANALYSIS</scope>
</reference>
<proteinExistence type="evidence at protein level"/>
<accession>Q86MA1</accession>
<dbReference type="EMBL" id="AY232301">
    <property type="protein sequence ID" value="AAO74637.1"/>
    <property type="molecule type" value="mRNA"/>
</dbReference>
<dbReference type="PDB" id="2JR8">
    <property type="method" value="NMR"/>
    <property type="chains" value="A=26-67"/>
</dbReference>
<dbReference type="PDBsum" id="2JR8"/>
<dbReference type="SMR" id="Q86MA1"/>
<dbReference type="TCDB" id="1.C.114.1.2">
    <property type="family name" value="the membrane permeabilizing peptide, moricin (moricin) family"/>
</dbReference>
<dbReference type="EvolutionaryTrace" id="Q86MA1"/>
<dbReference type="GO" id="GO:0005576">
    <property type="term" value="C:extracellular region"/>
    <property type="evidence" value="ECO:0007669"/>
    <property type="project" value="UniProtKB-SubCell"/>
</dbReference>
<dbReference type="GO" id="GO:0050829">
    <property type="term" value="P:defense response to Gram-negative bacterium"/>
    <property type="evidence" value="ECO:0000314"/>
    <property type="project" value="UniProtKB"/>
</dbReference>
<dbReference type="GO" id="GO:0050830">
    <property type="term" value="P:defense response to Gram-positive bacterium"/>
    <property type="evidence" value="ECO:0000314"/>
    <property type="project" value="UniProtKB"/>
</dbReference>
<dbReference type="GO" id="GO:0045087">
    <property type="term" value="P:innate immune response"/>
    <property type="evidence" value="ECO:0007669"/>
    <property type="project" value="UniProtKB-KW"/>
</dbReference>
<dbReference type="GO" id="GO:0009617">
    <property type="term" value="P:response to bacterium"/>
    <property type="evidence" value="ECO:0000270"/>
    <property type="project" value="UniProtKB"/>
</dbReference>
<dbReference type="Gene3D" id="1.20.5.750">
    <property type="entry name" value="Moricin domain"/>
    <property type="match status" value="1"/>
</dbReference>
<dbReference type="InterPro" id="IPR009456">
    <property type="entry name" value="Moricin_fam"/>
</dbReference>
<dbReference type="InterPro" id="IPR037043">
    <property type="entry name" value="Moricin_sf"/>
</dbReference>
<dbReference type="Pfam" id="PF06451">
    <property type="entry name" value="Moricin"/>
    <property type="match status" value="1"/>
</dbReference>
<name>MOR_MANSE</name>
<organism evidence="8">
    <name type="scientific">Manduca sexta</name>
    <name type="common">Tobacco hawkmoth</name>
    <name type="synonym">Tobacco hornworm</name>
    <dbReference type="NCBI Taxonomy" id="7130"/>
    <lineage>
        <taxon>Eukaryota</taxon>
        <taxon>Metazoa</taxon>
        <taxon>Ecdysozoa</taxon>
        <taxon>Arthropoda</taxon>
        <taxon>Hexapoda</taxon>
        <taxon>Insecta</taxon>
        <taxon>Pterygota</taxon>
        <taxon>Neoptera</taxon>
        <taxon>Endopterygota</taxon>
        <taxon>Lepidoptera</taxon>
        <taxon>Glossata</taxon>
        <taxon>Ditrysia</taxon>
        <taxon>Bombycoidea</taxon>
        <taxon>Sphingidae</taxon>
        <taxon>Sphinginae</taxon>
        <taxon>Sphingini</taxon>
        <taxon>Manduca</taxon>
    </lineage>
</organism>
<sequence length="67" mass="7206">MKLTSLFIFVIVALSLLFSSTDAAPGKIPVKAIKQAGKVIGKGLRAINIAGTTHDVVSFFRPKKKKH</sequence>
<keyword id="KW-0002">3D-structure</keyword>
<keyword id="KW-0044">Antibiotic</keyword>
<keyword id="KW-0929">Antimicrobial</keyword>
<keyword id="KW-0391">Immunity</keyword>
<keyword id="KW-0399">Innate immunity</keyword>
<keyword id="KW-0964">Secreted</keyword>
<keyword id="KW-0732">Signal</keyword>
<protein>
    <recommendedName>
        <fullName evidence="6 8">Moricin</fullName>
    </recommendedName>
</protein>
<evidence type="ECO:0000255" key="1"/>
<evidence type="ECO:0000269" key="2">
    <source>
    </source>
</evidence>
<evidence type="ECO:0000269" key="3">
    <source>
    </source>
</evidence>
<evidence type="ECO:0000269" key="4">
    <source>
    </source>
</evidence>
<evidence type="ECO:0000303" key="5">
    <source>
    </source>
</evidence>
<evidence type="ECO:0000303" key="6">
    <source>
    </source>
</evidence>
<evidence type="ECO:0000305" key="7"/>
<evidence type="ECO:0000312" key="8">
    <source>
        <dbReference type="EMBL" id="AAO74637.1"/>
    </source>
</evidence>
<evidence type="ECO:0007744" key="9">
    <source>
        <dbReference type="PDB" id="2JR8"/>
    </source>
</evidence>
<evidence type="ECO:0007829" key="10">
    <source>
        <dbReference type="PDB" id="2JR8"/>
    </source>
</evidence>